<feature type="chain" id="PRO_1000014664" description="Small ribosomal subunit protein bS20">
    <location>
        <begin position="1"/>
        <end position="78"/>
    </location>
</feature>
<accession>A3CMP2</accession>
<reference key="1">
    <citation type="journal article" date="2007" name="J. Bacteriol.">
        <title>Genome of the opportunistic pathogen Streptococcus sanguinis.</title>
        <authorList>
            <person name="Xu P."/>
            <person name="Alves J.M."/>
            <person name="Kitten T."/>
            <person name="Brown A."/>
            <person name="Chen Z."/>
            <person name="Ozaki L.S."/>
            <person name="Manque P."/>
            <person name="Ge X."/>
            <person name="Serrano M.G."/>
            <person name="Puiu D."/>
            <person name="Hendricks S."/>
            <person name="Wang Y."/>
            <person name="Chaplin M.D."/>
            <person name="Akan D."/>
            <person name="Paik S."/>
            <person name="Peterson D.L."/>
            <person name="Macrina F.L."/>
            <person name="Buck G.A."/>
        </authorList>
    </citation>
    <scope>NUCLEOTIDE SEQUENCE [LARGE SCALE GENOMIC DNA]</scope>
    <source>
        <strain>SK36</strain>
    </source>
</reference>
<gene>
    <name evidence="1" type="primary">rpsT</name>
    <name type="ordered locus">SSA_1032</name>
</gene>
<keyword id="KW-1185">Reference proteome</keyword>
<keyword id="KW-0687">Ribonucleoprotein</keyword>
<keyword id="KW-0689">Ribosomal protein</keyword>
<keyword id="KW-0694">RNA-binding</keyword>
<keyword id="KW-0699">rRNA-binding</keyword>
<dbReference type="EMBL" id="CP000387">
    <property type="protein sequence ID" value="ABN44447.1"/>
    <property type="molecule type" value="Genomic_DNA"/>
</dbReference>
<dbReference type="RefSeq" id="WP_002895661.1">
    <property type="nucleotide sequence ID" value="NZ_CAXTYR010000001.1"/>
</dbReference>
<dbReference type="RefSeq" id="YP_001034997.1">
    <property type="nucleotide sequence ID" value="NC_009009.1"/>
</dbReference>
<dbReference type="SMR" id="A3CMP2"/>
<dbReference type="STRING" id="388919.SSA_1032"/>
<dbReference type="KEGG" id="ssa:SSA_1032"/>
<dbReference type="PATRIC" id="fig|388919.9.peg.979"/>
<dbReference type="eggNOG" id="COG0268">
    <property type="taxonomic scope" value="Bacteria"/>
</dbReference>
<dbReference type="HOGENOM" id="CLU_160655_1_1_9"/>
<dbReference type="OrthoDB" id="9808392at2"/>
<dbReference type="Proteomes" id="UP000002148">
    <property type="component" value="Chromosome"/>
</dbReference>
<dbReference type="GO" id="GO:0005829">
    <property type="term" value="C:cytosol"/>
    <property type="evidence" value="ECO:0007669"/>
    <property type="project" value="TreeGrafter"/>
</dbReference>
<dbReference type="GO" id="GO:0015935">
    <property type="term" value="C:small ribosomal subunit"/>
    <property type="evidence" value="ECO:0007669"/>
    <property type="project" value="TreeGrafter"/>
</dbReference>
<dbReference type="GO" id="GO:0070181">
    <property type="term" value="F:small ribosomal subunit rRNA binding"/>
    <property type="evidence" value="ECO:0007669"/>
    <property type="project" value="TreeGrafter"/>
</dbReference>
<dbReference type="GO" id="GO:0003735">
    <property type="term" value="F:structural constituent of ribosome"/>
    <property type="evidence" value="ECO:0007669"/>
    <property type="project" value="InterPro"/>
</dbReference>
<dbReference type="GO" id="GO:0006412">
    <property type="term" value="P:translation"/>
    <property type="evidence" value="ECO:0007669"/>
    <property type="project" value="UniProtKB-UniRule"/>
</dbReference>
<dbReference type="FunFam" id="1.20.58.110:FF:000001">
    <property type="entry name" value="30S ribosomal protein S20"/>
    <property type="match status" value="1"/>
</dbReference>
<dbReference type="Gene3D" id="1.20.58.110">
    <property type="entry name" value="Ribosomal protein S20"/>
    <property type="match status" value="1"/>
</dbReference>
<dbReference type="HAMAP" id="MF_00500">
    <property type="entry name" value="Ribosomal_bS20"/>
    <property type="match status" value="1"/>
</dbReference>
<dbReference type="InterPro" id="IPR002583">
    <property type="entry name" value="Ribosomal_bS20"/>
</dbReference>
<dbReference type="InterPro" id="IPR036510">
    <property type="entry name" value="Ribosomal_bS20_sf"/>
</dbReference>
<dbReference type="NCBIfam" id="TIGR00029">
    <property type="entry name" value="S20"/>
    <property type="match status" value="1"/>
</dbReference>
<dbReference type="PANTHER" id="PTHR33398">
    <property type="entry name" value="30S RIBOSOMAL PROTEIN S20"/>
    <property type="match status" value="1"/>
</dbReference>
<dbReference type="PANTHER" id="PTHR33398:SF1">
    <property type="entry name" value="SMALL RIBOSOMAL SUBUNIT PROTEIN BS20C"/>
    <property type="match status" value="1"/>
</dbReference>
<dbReference type="Pfam" id="PF01649">
    <property type="entry name" value="Ribosomal_S20p"/>
    <property type="match status" value="1"/>
</dbReference>
<dbReference type="SUPFAM" id="SSF46992">
    <property type="entry name" value="Ribosomal protein S20"/>
    <property type="match status" value="1"/>
</dbReference>
<proteinExistence type="inferred from homology"/>
<protein>
    <recommendedName>
        <fullName evidence="1">Small ribosomal subunit protein bS20</fullName>
    </recommendedName>
    <alternativeName>
        <fullName evidence="2">30S ribosomal protein S20</fullName>
    </alternativeName>
</protein>
<comment type="function">
    <text evidence="1">Binds directly to 16S ribosomal RNA.</text>
</comment>
<comment type="similarity">
    <text evidence="1">Belongs to the bacterial ribosomal protein bS20 family.</text>
</comment>
<organism>
    <name type="scientific">Streptococcus sanguinis (strain SK36)</name>
    <dbReference type="NCBI Taxonomy" id="388919"/>
    <lineage>
        <taxon>Bacteria</taxon>
        <taxon>Bacillati</taxon>
        <taxon>Bacillota</taxon>
        <taxon>Bacilli</taxon>
        <taxon>Lactobacillales</taxon>
        <taxon>Streptococcaceae</taxon>
        <taxon>Streptococcus</taxon>
    </lineage>
</organism>
<sequence length="78" mass="8535">MANIKSAIKRAELNVKHNEKNSAQKSAMRTAIKAFEANPSEELFRAASSAIDKAETKGLIHKNKASRDKARLSAKLAK</sequence>
<evidence type="ECO:0000255" key="1">
    <source>
        <dbReference type="HAMAP-Rule" id="MF_00500"/>
    </source>
</evidence>
<evidence type="ECO:0000305" key="2"/>
<name>RS20_STRSV</name>